<proteinExistence type="inferred from homology"/>
<feature type="chain" id="PRO_0000298953" description="Iron-sulfur cluster assembly SufBD family protein SAS0788">
    <location>
        <begin position="1"/>
        <end position="465"/>
    </location>
</feature>
<accession>Q6GB09</accession>
<organism>
    <name type="scientific">Staphylococcus aureus (strain MSSA476)</name>
    <dbReference type="NCBI Taxonomy" id="282459"/>
    <lineage>
        <taxon>Bacteria</taxon>
        <taxon>Bacillati</taxon>
        <taxon>Bacillota</taxon>
        <taxon>Bacilli</taxon>
        <taxon>Bacillales</taxon>
        <taxon>Staphylococcaceae</taxon>
        <taxon>Staphylococcus</taxon>
    </lineage>
</organism>
<comment type="similarity">
    <text evidence="1">Belongs to the iron-sulfur cluster assembly SufBD family.</text>
</comment>
<sequence>MAKKAPDVGDYKYGFHDDDVSIFRSERGLTENIVREISNMKNEPEWMLDFRLKSLKLFYKMPMPQWGGDLSELNFDDITYYVKPSEQAERSWDEVPEEIKRTFDKLGIPEAEQKYLAGVSAQYESEVVYHNMEKELEEKGIIFKDTDSALQENEELFKKYFASVVPAADNKFAALNSAVWSGGSFIYVPKNIKLDTPLQAYFRINSENMGQFERTLIIADEGASVHYVEGCTAPVYTTSSLHSAVVEIIVHKDAHVRYTTIQNWANNVYNLVTKRTFVYENGNMEWVDGNLGSKLTMKYPNCVLLGEGAKGSTLSIAFAGKGQVQDAGAKMIHKAPNTSSTIVSKSISKNGGKVIYRGIVHFGRKAKGARSNIECDTLILDNESTSDTIPYNEVFNDQISLEHEAKVSKVSEEQLFYLMSRGISEEEATEMIVMGFIEPFTKELPMEYAVEMNRLIKFEMEGSIG</sequence>
<reference key="1">
    <citation type="journal article" date="2004" name="Proc. Natl. Acad. Sci. U.S.A.">
        <title>Complete genomes of two clinical Staphylococcus aureus strains: evidence for the rapid evolution of virulence and drug resistance.</title>
        <authorList>
            <person name="Holden M.T.G."/>
            <person name="Feil E.J."/>
            <person name="Lindsay J.A."/>
            <person name="Peacock S.J."/>
            <person name="Day N.P.J."/>
            <person name="Enright M.C."/>
            <person name="Foster T.J."/>
            <person name="Moore C.E."/>
            <person name="Hurst L."/>
            <person name="Atkin R."/>
            <person name="Barron A."/>
            <person name="Bason N."/>
            <person name="Bentley S.D."/>
            <person name="Chillingworth C."/>
            <person name="Chillingworth T."/>
            <person name="Churcher C."/>
            <person name="Clark L."/>
            <person name="Corton C."/>
            <person name="Cronin A."/>
            <person name="Doggett J."/>
            <person name="Dowd L."/>
            <person name="Feltwell T."/>
            <person name="Hance Z."/>
            <person name="Harris B."/>
            <person name="Hauser H."/>
            <person name="Holroyd S."/>
            <person name="Jagels K."/>
            <person name="James K.D."/>
            <person name="Lennard N."/>
            <person name="Line A."/>
            <person name="Mayes R."/>
            <person name="Moule S."/>
            <person name="Mungall K."/>
            <person name="Ormond D."/>
            <person name="Quail M.A."/>
            <person name="Rabbinowitsch E."/>
            <person name="Rutherford K.M."/>
            <person name="Sanders M."/>
            <person name="Sharp S."/>
            <person name="Simmonds M."/>
            <person name="Stevens K."/>
            <person name="Whitehead S."/>
            <person name="Barrell B.G."/>
            <person name="Spratt B.G."/>
            <person name="Parkhill J."/>
        </authorList>
    </citation>
    <scope>NUCLEOTIDE SEQUENCE [LARGE SCALE GENOMIC DNA]</scope>
    <source>
        <strain>MSSA476</strain>
    </source>
</reference>
<evidence type="ECO:0000305" key="1"/>
<name>Y788_STAAS</name>
<gene>
    <name type="ordered locus">SAS0788</name>
</gene>
<dbReference type="EMBL" id="BX571857">
    <property type="protein sequence ID" value="CAG42562.1"/>
    <property type="molecule type" value="Genomic_DNA"/>
</dbReference>
<dbReference type="SMR" id="Q6GB09"/>
<dbReference type="KEGG" id="sas:SAS0788"/>
<dbReference type="HOGENOM" id="CLU_026231_0_1_9"/>
<dbReference type="GO" id="GO:0016226">
    <property type="term" value="P:iron-sulfur cluster assembly"/>
    <property type="evidence" value="ECO:0007669"/>
    <property type="project" value="InterPro"/>
</dbReference>
<dbReference type="InterPro" id="IPR055346">
    <property type="entry name" value="Fe-S_cluster_assembly_SufBD"/>
</dbReference>
<dbReference type="InterPro" id="IPR010231">
    <property type="entry name" value="SUF_FeS_clus_asmbl_SufB"/>
</dbReference>
<dbReference type="InterPro" id="IPR000825">
    <property type="entry name" value="SUF_FeS_clus_asmbl_SufBD_core"/>
</dbReference>
<dbReference type="InterPro" id="IPR037284">
    <property type="entry name" value="SUF_FeS_clus_asmbl_SufBD_sf"/>
</dbReference>
<dbReference type="InterPro" id="IPR045595">
    <property type="entry name" value="SufBD_N"/>
</dbReference>
<dbReference type="NCBIfam" id="TIGR01980">
    <property type="entry name" value="sufB"/>
    <property type="match status" value="1"/>
</dbReference>
<dbReference type="PANTHER" id="PTHR30508">
    <property type="entry name" value="FES CLUSTER ASSEMBLY PROTEIN SUF"/>
    <property type="match status" value="1"/>
</dbReference>
<dbReference type="PANTHER" id="PTHR30508:SF1">
    <property type="entry name" value="UPF0051 PROTEIN ABCI8, CHLOROPLASTIC-RELATED"/>
    <property type="match status" value="1"/>
</dbReference>
<dbReference type="Pfam" id="PF01458">
    <property type="entry name" value="SUFBD_core"/>
    <property type="match status" value="1"/>
</dbReference>
<dbReference type="Pfam" id="PF19295">
    <property type="entry name" value="SufBD_N"/>
    <property type="match status" value="1"/>
</dbReference>
<dbReference type="SUPFAM" id="SSF101960">
    <property type="entry name" value="Stabilizer of iron transporter SufD"/>
    <property type="match status" value="1"/>
</dbReference>
<protein>
    <recommendedName>
        <fullName>Iron-sulfur cluster assembly SufBD family protein SAS0788</fullName>
    </recommendedName>
</protein>